<comment type="similarity">
    <text evidence="1">Belongs to the bacterial ribosomal protein bL27 family.</text>
</comment>
<protein>
    <recommendedName>
        <fullName evidence="1">Large ribosomal subunit protein bL27</fullName>
    </recommendedName>
    <alternativeName>
        <fullName evidence="3">50S ribosomal protein L27</fullName>
    </alternativeName>
</protein>
<dbReference type="EMBL" id="CP000267">
    <property type="protein sequence ID" value="ABD69003.1"/>
    <property type="molecule type" value="Genomic_DNA"/>
</dbReference>
<dbReference type="RefSeq" id="WP_011463571.1">
    <property type="nucleotide sequence ID" value="NC_007908.1"/>
</dbReference>
<dbReference type="SMR" id="Q21Z00"/>
<dbReference type="STRING" id="338969.Rfer_1269"/>
<dbReference type="KEGG" id="rfr:Rfer_1269"/>
<dbReference type="eggNOG" id="COG0211">
    <property type="taxonomic scope" value="Bacteria"/>
</dbReference>
<dbReference type="HOGENOM" id="CLU_095424_4_1_4"/>
<dbReference type="OrthoDB" id="9803474at2"/>
<dbReference type="Proteomes" id="UP000008332">
    <property type="component" value="Chromosome"/>
</dbReference>
<dbReference type="GO" id="GO:0022625">
    <property type="term" value="C:cytosolic large ribosomal subunit"/>
    <property type="evidence" value="ECO:0007669"/>
    <property type="project" value="TreeGrafter"/>
</dbReference>
<dbReference type="GO" id="GO:0003735">
    <property type="term" value="F:structural constituent of ribosome"/>
    <property type="evidence" value="ECO:0007669"/>
    <property type="project" value="InterPro"/>
</dbReference>
<dbReference type="GO" id="GO:0006412">
    <property type="term" value="P:translation"/>
    <property type="evidence" value="ECO:0007669"/>
    <property type="project" value="UniProtKB-UniRule"/>
</dbReference>
<dbReference type="FunFam" id="2.40.50.100:FF:000020">
    <property type="entry name" value="50S ribosomal protein L27"/>
    <property type="match status" value="1"/>
</dbReference>
<dbReference type="Gene3D" id="2.40.50.100">
    <property type="match status" value="1"/>
</dbReference>
<dbReference type="HAMAP" id="MF_00539">
    <property type="entry name" value="Ribosomal_bL27"/>
    <property type="match status" value="1"/>
</dbReference>
<dbReference type="InterPro" id="IPR001684">
    <property type="entry name" value="Ribosomal_bL27"/>
</dbReference>
<dbReference type="InterPro" id="IPR018261">
    <property type="entry name" value="Ribosomal_bL27_CS"/>
</dbReference>
<dbReference type="NCBIfam" id="TIGR00062">
    <property type="entry name" value="L27"/>
    <property type="match status" value="1"/>
</dbReference>
<dbReference type="PANTHER" id="PTHR15893:SF0">
    <property type="entry name" value="LARGE RIBOSOMAL SUBUNIT PROTEIN BL27M"/>
    <property type="match status" value="1"/>
</dbReference>
<dbReference type="PANTHER" id="PTHR15893">
    <property type="entry name" value="RIBOSOMAL PROTEIN L27"/>
    <property type="match status" value="1"/>
</dbReference>
<dbReference type="Pfam" id="PF01016">
    <property type="entry name" value="Ribosomal_L27"/>
    <property type="match status" value="1"/>
</dbReference>
<dbReference type="PRINTS" id="PR00063">
    <property type="entry name" value="RIBOSOMALL27"/>
</dbReference>
<dbReference type="SUPFAM" id="SSF110324">
    <property type="entry name" value="Ribosomal L27 protein-like"/>
    <property type="match status" value="1"/>
</dbReference>
<dbReference type="PROSITE" id="PS00831">
    <property type="entry name" value="RIBOSOMAL_L27"/>
    <property type="match status" value="1"/>
</dbReference>
<accession>Q21Z00</accession>
<keyword id="KW-1185">Reference proteome</keyword>
<keyword id="KW-0687">Ribonucleoprotein</keyword>
<keyword id="KW-0689">Ribosomal protein</keyword>
<evidence type="ECO:0000255" key="1">
    <source>
        <dbReference type="HAMAP-Rule" id="MF_00539"/>
    </source>
</evidence>
<evidence type="ECO:0000256" key="2">
    <source>
        <dbReference type="SAM" id="MobiDB-lite"/>
    </source>
</evidence>
<evidence type="ECO:0000305" key="3"/>
<proteinExistence type="inferred from homology"/>
<name>RL27_ALBFT</name>
<feature type="chain" id="PRO_1000017575" description="Large ribosomal subunit protein bL27">
    <location>
        <begin position="1"/>
        <end position="85"/>
    </location>
</feature>
<feature type="region of interest" description="Disordered" evidence="2">
    <location>
        <begin position="1"/>
        <end position="21"/>
    </location>
</feature>
<reference key="1">
    <citation type="submission" date="2006-02" db="EMBL/GenBank/DDBJ databases">
        <title>Complete sequence of chromosome of Rhodoferax ferrireducens DSM 15236.</title>
        <authorList>
            <person name="Copeland A."/>
            <person name="Lucas S."/>
            <person name="Lapidus A."/>
            <person name="Barry K."/>
            <person name="Detter J.C."/>
            <person name="Glavina del Rio T."/>
            <person name="Hammon N."/>
            <person name="Israni S."/>
            <person name="Pitluck S."/>
            <person name="Brettin T."/>
            <person name="Bruce D."/>
            <person name="Han C."/>
            <person name="Tapia R."/>
            <person name="Gilna P."/>
            <person name="Kiss H."/>
            <person name="Schmutz J."/>
            <person name="Larimer F."/>
            <person name="Land M."/>
            <person name="Kyrpides N."/>
            <person name="Ivanova N."/>
            <person name="Richardson P."/>
        </authorList>
    </citation>
    <scope>NUCLEOTIDE SEQUENCE [LARGE SCALE GENOMIC DNA]</scope>
    <source>
        <strain>ATCC BAA-621 / DSM 15236 / T118</strain>
    </source>
</reference>
<gene>
    <name evidence="1" type="primary">rpmA</name>
    <name type="ordered locus">Rfer_1269</name>
</gene>
<organism>
    <name type="scientific">Albidiferax ferrireducens (strain ATCC BAA-621 / DSM 15236 / T118)</name>
    <name type="common">Rhodoferax ferrireducens</name>
    <dbReference type="NCBI Taxonomy" id="338969"/>
    <lineage>
        <taxon>Bacteria</taxon>
        <taxon>Pseudomonadati</taxon>
        <taxon>Pseudomonadota</taxon>
        <taxon>Betaproteobacteria</taxon>
        <taxon>Burkholderiales</taxon>
        <taxon>Comamonadaceae</taxon>
        <taxon>Rhodoferax</taxon>
    </lineage>
</organism>
<sequence length="85" mass="8821">MAHKKGGGSTHNGRDSKPKMLGVKKFGGELISAGAIIVRQRGTKFHPGVNVGIGKDHTLFALVDGHVAFTTKGAMNKPTVNVATA</sequence>